<evidence type="ECO:0000250" key="1"/>
<evidence type="ECO:0000255" key="2"/>
<evidence type="ECO:0000305" key="3"/>
<accession>P33388</accession>
<proteinExistence type="inferred from homology"/>
<feature type="signal peptide" evidence="2">
    <location>
        <begin position="1"/>
        <end position="30"/>
    </location>
</feature>
<feature type="chain" id="PRO_0000009328" description="Outer membrane usher protein SefC">
    <location>
        <begin position="31"/>
        <end position="814"/>
    </location>
</feature>
<feature type="disulfide bond" evidence="2">
    <location>
        <begin position="792"/>
        <end position="813"/>
    </location>
</feature>
<gene>
    <name type="primary">sefC</name>
</gene>
<sequence>MKKTTITLFVLTSVFHSGNVFSRQYNFDYGSLSLPPGENASFLSVETLPGNYVVDVYLNNQLKETTELYFKSMTQTLEPCLTKEKLIKYGIAIQELHGLQFDNEQCVLLEHSPLKYTYNAANQSLLLNAPSKILSPIDSEIADENIWDDGINAFLLNYRANYLHSKVGGEDSYFGQIQPGFNFGPWRLRNLSSWQNLSSEKKFESAYIYAERGLKKIKSKLTVGDKYTSADLFDSVPFRGFSLNKDESMIPFSQRTYYPTIRGIAKTNATVEVRQNGYLIYSTSVPPGQFEIGREQIADLGVGVGVLDVSIYEKNGQVQNYTVPYSTPVLSLPDGYSKYSVTIGRYREVNNDYIDPVFFEGTYIYGLPYGFTLFGGVQWVNIYNSYAIGASKDIGEYGALSFDWKTSVSKTDTSNENGHAYGIRYNKNIAQTNTEVSLASHYYYSKNYRTFSEAIHSSEHDEFYDKNKKSTTSMLLSQALGSLGSVNLSYNYDKYWKHEGKKSIIASYGKNLNGVSLSLSYTKSTSKISEENEDLFSFLLSVPLQKLTNHEMYATYQNSSSSKHDMNHDLGITGVAFNSQLTWQARGQIEDKSKNQKATFLNASWRGTYGEIGANYSHNEINRDIGMNVSGGVIAHSSGITFGQSISDTAALVEAKGVSGAKVLGLPGVRTDFRGYTISSYLTPYMNNFISIDPTTLPINTDIRQTDIQVVPTEGAIVKAVYKTSVGTNALIRITRTNGKPLALGTVLSLKNNDGVIQSTSIVGEDGQAYVSGLSGVQKLIASWGNKPSDTCTVFYSLPDKNKGQISFLNGVCK</sequence>
<protein>
    <recommendedName>
        <fullName>Outer membrane usher protein SefC</fullName>
    </recommendedName>
</protein>
<name>SEFC_SALEN</name>
<comment type="function">
    <text>Involved in the export and assembly of the SefA fimbrial subunit.</text>
</comment>
<comment type="subcellular location">
    <subcellularLocation>
        <location evidence="1">Cell outer membrane</location>
        <topology evidence="1">Multi-pass membrane protein</topology>
    </subcellularLocation>
</comment>
<comment type="similarity">
    <text evidence="3">Belongs to the fimbrial export usher family.</text>
</comment>
<reference key="1">
    <citation type="journal article" date="1993" name="J. Bacteriol.">
        <title>Characterization of three fimbrial genes, sefABC, of Salmonella enteritidis.</title>
        <authorList>
            <person name="Clouthier S.C."/>
            <person name="Mueller K.-H."/>
            <person name="Doran J.L."/>
            <person name="Collinson S.K."/>
            <person name="Kay W.W."/>
        </authorList>
    </citation>
    <scope>NUCLEOTIDE SEQUENCE [GENOMIC DNA]</scope>
    <source>
        <strain>27655-3B</strain>
    </source>
</reference>
<organism>
    <name type="scientific">Salmonella enteritidis</name>
    <dbReference type="NCBI Taxonomy" id="149539"/>
    <lineage>
        <taxon>Bacteria</taxon>
        <taxon>Pseudomonadati</taxon>
        <taxon>Pseudomonadota</taxon>
        <taxon>Gammaproteobacteria</taxon>
        <taxon>Enterobacterales</taxon>
        <taxon>Enterobacteriaceae</taxon>
        <taxon>Salmonella</taxon>
    </lineage>
</organism>
<dbReference type="EMBL" id="L11010">
    <property type="protein sequence ID" value="AAA27221.1"/>
    <property type="molecule type" value="Genomic_DNA"/>
</dbReference>
<dbReference type="PIR" id="C40618">
    <property type="entry name" value="C40618"/>
</dbReference>
<dbReference type="RefSeq" id="WP_000753927.1">
    <property type="nucleotide sequence ID" value="NZ_WIDA01000014.1"/>
</dbReference>
<dbReference type="SMR" id="P33388"/>
<dbReference type="PATRIC" id="fig|149539.316.peg.4555"/>
<dbReference type="OMA" id="PENVEWD"/>
<dbReference type="GO" id="GO:0009279">
    <property type="term" value="C:cell outer membrane"/>
    <property type="evidence" value="ECO:0007669"/>
    <property type="project" value="UniProtKB-SubCell"/>
</dbReference>
<dbReference type="GO" id="GO:0015473">
    <property type="term" value="F:fimbrial usher porin activity"/>
    <property type="evidence" value="ECO:0007669"/>
    <property type="project" value="InterPro"/>
</dbReference>
<dbReference type="GO" id="GO:0009297">
    <property type="term" value="P:pilus assembly"/>
    <property type="evidence" value="ECO:0007669"/>
    <property type="project" value="InterPro"/>
</dbReference>
<dbReference type="FunFam" id="2.60.40.2610:FF:000001">
    <property type="entry name" value="Outer membrane fimbrial usher protein"/>
    <property type="match status" value="1"/>
</dbReference>
<dbReference type="Gene3D" id="2.60.40.2070">
    <property type="match status" value="1"/>
</dbReference>
<dbReference type="Gene3D" id="2.60.40.3110">
    <property type="match status" value="1"/>
</dbReference>
<dbReference type="Gene3D" id="3.10.20.410">
    <property type="match status" value="1"/>
</dbReference>
<dbReference type="Gene3D" id="2.60.40.2610">
    <property type="entry name" value="Outer membrane usher protein FimD, plug domain"/>
    <property type="match status" value="1"/>
</dbReference>
<dbReference type="InterPro" id="IPR000015">
    <property type="entry name" value="Fimb_usher"/>
</dbReference>
<dbReference type="InterPro" id="IPR042186">
    <property type="entry name" value="FimD_plug_dom"/>
</dbReference>
<dbReference type="InterPro" id="IPR025949">
    <property type="entry name" value="PapC-like_C"/>
</dbReference>
<dbReference type="InterPro" id="IPR043142">
    <property type="entry name" value="PapC-like_C_sf"/>
</dbReference>
<dbReference type="InterPro" id="IPR025885">
    <property type="entry name" value="PapC_N"/>
</dbReference>
<dbReference type="InterPro" id="IPR037224">
    <property type="entry name" value="PapC_N_sf"/>
</dbReference>
<dbReference type="NCBIfam" id="NF011774">
    <property type="entry name" value="PRK15235.1"/>
    <property type="match status" value="1"/>
</dbReference>
<dbReference type="PANTHER" id="PTHR30451:SF9">
    <property type="entry name" value="F1 CAPSULE-ANCHORING PROTEIN"/>
    <property type="match status" value="1"/>
</dbReference>
<dbReference type="PANTHER" id="PTHR30451">
    <property type="entry name" value="OUTER MEMBRANE USHER PROTEIN"/>
    <property type="match status" value="1"/>
</dbReference>
<dbReference type="Pfam" id="PF13953">
    <property type="entry name" value="PapC_C"/>
    <property type="match status" value="1"/>
</dbReference>
<dbReference type="Pfam" id="PF13954">
    <property type="entry name" value="PapC_N"/>
    <property type="match status" value="1"/>
</dbReference>
<dbReference type="Pfam" id="PF00577">
    <property type="entry name" value="Usher"/>
    <property type="match status" value="1"/>
</dbReference>
<dbReference type="SUPFAM" id="SSF141729">
    <property type="entry name" value="FimD N-terminal domain-like"/>
    <property type="match status" value="1"/>
</dbReference>
<keyword id="KW-0998">Cell outer membrane</keyword>
<keyword id="KW-1015">Disulfide bond</keyword>
<keyword id="KW-1029">Fimbrium biogenesis</keyword>
<keyword id="KW-0472">Membrane</keyword>
<keyword id="KW-0732">Signal</keyword>
<keyword id="KW-0812">Transmembrane</keyword>
<keyword id="KW-1134">Transmembrane beta strand</keyword>
<keyword id="KW-0813">Transport</keyword>